<accession>A7ZW23</accession>
<feature type="chain" id="PRO_1000063549" description="3-isopropylmalate dehydratase large subunit">
    <location>
        <begin position="1"/>
        <end position="466"/>
    </location>
</feature>
<feature type="binding site" evidence="1">
    <location>
        <position position="347"/>
    </location>
    <ligand>
        <name>[4Fe-4S] cluster</name>
        <dbReference type="ChEBI" id="CHEBI:49883"/>
    </ligand>
</feature>
<feature type="binding site" evidence="1">
    <location>
        <position position="407"/>
    </location>
    <ligand>
        <name>[4Fe-4S] cluster</name>
        <dbReference type="ChEBI" id="CHEBI:49883"/>
    </ligand>
</feature>
<feature type="binding site" evidence="1">
    <location>
        <position position="410"/>
    </location>
    <ligand>
        <name>[4Fe-4S] cluster</name>
        <dbReference type="ChEBI" id="CHEBI:49883"/>
    </ligand>
</feature>
<comment type="function">
    <text evidence="1">Catalyzes the isomerization between 2-isopropylmalate and 3-isopropylmalate, via the formation of 2-isopropylmaleate.</text>
</comment>
<comment type="catalytic activity">
    <reaction evidence="1">
        <text>(2R,3S)-3-isopropylmalate = (2S)-2-isopropylmalate</text>
        <dbReference type="Rhea" id="RHEA:32287"/>
        <dbReference type="ChEBI" id="CHEBI:1178"/>
        <dbReference type="ChEBI" id="CHEBI:35121"/>
        <dbReference type="EC" id="4.2.1.33"/>
    </reaction>
</comment>
<comment type="cofactor">
    <cofactor evidence="1">
        <name>[4Fe-4S] cluster</name>
        <dbReference type="ChEBI" id="CHEBI:49883"/>
    </cofactor>
    <text evidence="1">Binds 1 [4Fe-4S] cluster per subunit.</text>
</comment>
<comment type="pathway">
    <text evidence="1">Amino-acid biosynthesis; L-leucine biosynthesis; L-leucine from 3-methyl-2-oxobutanoate: step 2/4.</text>
</comment>
<comment type="subunit">
    <text evidence="1">Heterodimer of LeuC and LeuD.</text>
</comment>
<comment type="similarity">
    <text evidence="1">Belongs to the aconitase/IPM isomerase family. LeuC type 1 subfamily.</text>
</comment>
<evidence type="ECO:0000255" key="1">
    <source>
        <dbReference type="HAMAP-Rule" id="MF_01026"/>
    </source>
</evidence>
<reference key="1">
    <citation type="journal article" date="2008" name="J. Bacteriol.">
        <title>The pangenome structure of Escherichia coli: comparative genomic analysis of E. coli commensal and pathogenic isolates.</title>
        <authorList>
            <person name="Rasko D.A."/>
            <person name="Rosovitz M.J."/>
            <person name="Myers G.S.A."/>
            <person name="Mongodin E.F."/>
            <person name="Fricke W.F."/>
            <person name="Gajer P."/>
            <person name="Crabtree J."/>
            <person name="Sebaihia M."/>
            <person name="Thomson N.R."/>
            <person name="Chaudhuri R."/>
            <person name="Henderson I.R."/>
            <person name="Sperandio V."/>
            <person name="Ravel J."/>
        </authorList>
    </citation>
    <scope>NUCLEOTIDE SEQUENCE [LARGE SCALE GENOMIC DNA]</scope>
    <source>
        <strain>HS</strain>
    </source>
</reference>
<protein>
    <recommendedName>
        <fullName evidence="1">3-isopropylmalate dehydratase large subunit</fullName>
        <ecNumber evidence="1">4.2.1.33</ecNumber>
    </recommendedName>
    <alternativeName>
        <fullName evidence="1">Alpha-IPM isomerase</fullName>
        <shortName evidence="1">IPMI</shortName>
    </alternativeName>
    <alternativeName>
        <fullName evidence="1">Isopropylmalate isomerase</fullName>
    </alternativeName>
</protein>
<keyword id="KW-0004">4Fe-4S</keyword>
<keyword id="KW-0028">Amino-acid biosynthesis</keyword>
<keyword id="KW-0100">Branched-chain amino acid biosynthesis</keyword>
<keyword id="KW-0408">Iron</keyword>
<keyword id="KW-0411">Iron-sulfur</keyword>
<keyword id="KW-0432">Leucine biosynthesis</keyword>
<keyword id="KW-0456">Lyase</keyword>
<keyword id="KW-0479">Metal-binding</keyword>
<proteinExistence type="inferred from homology"/>
<gene>
    <name evidence="1" type="primary">leuC</name>
    <name type="ordered locus">EcHS_A0077</name>
</gene>
<organism>
    <name type="scientific">Escherichia coli O9:H4 (strain HS)</name>
    <dbReference type="NCBI Taxonomy" id="331112"/>
    <lineage>
        <taxon>Bacteria</taxon>
        <taxon>Pseudomonadati</taxon>
        <taxon>Pseudomonadota</taxon>
        <taxon>Gammaproteobacteria</taxon>
        <taxon>Enterobacterales</taxon>
        <taxon>Enterobacteriaceae</taxon>
        <taxon>Escherichia</taxon>
    </lineage>
</organism>
<name>LEUC_ECOHS</name>
<sequence>MAKTLYEKLFDAHVVYEAENETPLLYIDRHLVHEVTSPQAFDGLRAHGRPVRQPGKTFATMDHNVSTQTKDINACGEMARIQMQELIKNCKEFGVELYDLNHPYQGIVHVMGPEQGVTLPGMTIVCGDSHTATHGAFGALAFGIGTSEVEHVLATQTLKQGRAKTMKIEVQGKAAPGITAKDIVLAIIGKTGSAGGTGHVVEFCGEAIRDLSMEGRMTLCNMAIEMGAKAGLVAPDETTFNYVKGRLHAPKGKDFDDAIAYWKTLQTDEGATFDTVVTLQAEEISPQVTWGTNPGQVISVNDNIPDPASFADPVERASAEKALAYMGLKPGIPLTEVAIDKVFIGSCTNSRIEDLRAAAEIAKGRKVAPGVQALVVPGSGPVKAQAEAEGLDKIFIEAGFEWRLPGCSMCLAMNNDRLNPGERCASTSNRNFEGRQGRGGRTHLVSPAMAAAAAVTGHFADIRNIK</sequence>
<dbReference type="EC" id="4.2.1.33" evidence="1"/>
<dbReference type="EMBL" id="CP000802">
    <property type="protein sequence ID" value="ABV04477.1"/>
    <property type="molecule type" value="Genomic_DNA"/>
</dbReference>
<dbReference type="RefSeq" id="WP_001140641.1">
    <property type="nucleotide sequence ID" value="NC_009800.1"/>
</dbReference>
<dbReference type="SMR" id="A7ZW23"/>
<dbReference type="KEGG" id="ecx:EcHS_A0077"/>
<dbReference type="HOGENOM" id="CLU_006714_3_4_6"/>
<dbReference type="UniPathway" id="UPA00048">
    <property type="reaction ID" value="UER00071"/>
</dbReference>
<dbReference type="GO" id="GO:0003861">
    <property type="term" value="F:3-isopropylmalate dehydratase activity"/>
    <property type="evidence" value="ECO:0007669"/>
    <property type="project" value="UniProtKB-UniRule"/>
</dbReference>
<dbReference type="GO" id="GO:0051539">
    <property type="term" value="F:4 iron, 4 sulfur cluster binding"/>
    <property type="evidence" value="ECO:0007669"/>
    <property type="project" value="UniProtKB-KW"/>
</dbReference>
<dbReference type="GO" id="GO:0046872">
    <property type="term" value="F:metal ion binding"/>
    <property type="evidence" value="ECO:0007669"/>
    <property type="project" value="UniProtKB-KW"/>
</dbReference>
<dbReference type="GO" id="GO:0009098">
    <property type="term" value="P:L-leucine biosynthetic process"/>
    <property type="evidence" value="ECO:0007669"/>
    <property type="project" value="UniProtKB-UniRule"/>
</dbReference>
<dbReference type="CDD" id="cd01583">
    <property type="entry name" value="IPMI"/>
    <property type="match status" value="1"/>
</dbReference>
<dbReference type="FunFam" id="3.30.499.10:FF:000006">
    <property type="entry name" value="3-isopropylmalate dehydratase large subunit"/>
    <property type="match status" value="1"/>
</dbReference>
<dbReference type="FunFam" id="3.30.499.10:FF:000007">
    <property type="entry name" value="3-isopropylmalate dehydratase large subunit"/>
    <property type="match status" value="1"/>
</dbReference>
<dbReference type="Gene3D" id="3.30.499.10">
    <property type="entry name" value="Aconitase, domain 3"/>
    <property type="match status" value="2"/>
</dbReference>
<dbReference type="HAMAP" id="MF_01026">
    <property type="entry name" value="LeuC_type1"/>
    <property type="match status" value="1"/>
</dbReference>
<dbReference type="InterPro" id="IPR004430">
    <property type="entry name" value="3-IsopropMal_deHydase_lsu"/>
</dbReference>
<dbReference type="InterPro" id="IPR015931">
    <property type="entry name" value="Acnase/IPM_dHydase_lsu_aba_1/3"/>
</dbReference>
<dbReference type="InterPro" id="IPR001030">
    <property type="entry name" value="Acoase/IPM_deHydtase_lsu_aba"/>
</dbReference>
<dbReference type="InterPro" id="IPR018136">
    <property type="entry name" value="Aconitase_4Fe-4S_BS"/>
</dbReference>
<dbReference type="InterPro" id="IPR036008">
    <property type="entry name" value="Aconitase_4Fe-4S_dom"/>
</dbReference>
<dbReference type="InterPro" id="IPR050067">
    <property type="entry name" value="IPM_dehydratase_rel_enz"/>
</dbReference>
<dbReference type="InterPro" id="IPR033941">
    <property type="entry name" value="IPMI_cat"/>
</dbReference>
<dbReference type="NCBIfam" id="TIGR00170">
    <property type="entry name" value="leuC"/>
    <property type="match status" value="1"/>
</dbReference>
<dbReference type="NCBIfam" id="NF004016">
    <property type="entry name" value="PRK05478.1"/>
    <property type="match status" value="1"/>
</dbReference>
<dbReference type="NCBIfam" id="NF009116">
    <property type="entry name" value="PRK12466.1"/>
    <property type="match status" value="1"/>
</dbReference>
<dbReference type="PANTHER" id="PTHR43822:SF9">
    <property type="entry name" value="3-ISOPROPYLMALATE DEHYDRATASE"/>
    <property type="match status" value="1"/>
</dbReference>
<dbReference type="PANTHER" id="PTHR43822">
    <property type="entry name" value="HOMOACONITASE, MITOCHONDRIAL-RELATED"/>
    <property type="match status" value="1"/>
</dbReference>
<dbReference type="Pfam" id="PF00330">
    <property type="entry name" value="Aconitase"/>
    <property type="match status" value="1"/>
</dbReference>
<dbReference type="PRINTS" id="PR00415">
    <property type="entry name" value="ACONITASE"/>
</dbReference>
<dbReference type="SUPFAM" id="SSF53732">
    <property type="entry name" value="Aconitase iron-sulfur domain"/>
    <property type="match status" value="1"/>
</dbReference>
<dbReference type="PROSITE" id="PS00450">
    <property type="entry name" value="ACONITASE_1"/>
    <property type="match status" value="1"/>
</dbReference>
<dbReference type="PROSITE" id="PS01244">
    <property type="entry name" value="ACONITASE_2"/>
    <property type="match status" value="1"/>
</dbReference>